<protein>
    <recommendedName>
        <fullName evidence="1">Uroporphyrinogen decarboxylase</fullName>
        <shortName evidence="1">UPD</shortName>
        <shortName evidence="1">URO-D</shortName>
        <ecNumber evidence="1">4.1.1.37</ecNumber>
    </recommendedName>
</protein>
<reference key="1">
    <citation type="submission" date="2006-03" db="EMBL/GenBank/DDBJ databases">
        <title>Complete sequence of chromosome of Psychrobacter cryohalolentis K5.</title>
        <authorList>
            <consortium name="US DOE Joint Genome Institute"/>
            <person name="Copeland A."/>
            <person name="Lucas S."/>
            <person name="Lapidus A."/>
            <person name="Barry K."/>
            <person name="Detter J.C."/>
            <person name="Glavina T."/>
            <person name="Hammon N."/>
            <person name="Israni S."/>
            <person name="Dalin E."/>
            <person name="Tice H."/>
            <person name="Pitluck S."/>
            <person name="Brettin T."/>
            <person name="Bruce D."/>
            <person name="Han C."/>
            <person name="Tapia R."/>
            <person name="Sims D.R."/>
            <person name="Gilna P."/>
            <person name="Schmutz J."/>
            <person name="Larimer F."/>
            <person name="Land M."/>
            <person name="Hauser L."/>
            <person name="Kyrpides N."/>
            <person name="Kim E."/>
            <person name="Richardson P."/>
        </authorList>
    </citation>
    <scope>NUCLEOTIDE SEQUENCE [LARGE SCALE GENOMIC DNA]</scope>
    <source>
        <strain>ATCC BAA-1226 / DSM 17306 / VKM B-2378 / K5</strain>
    </source>
</reference>
<comment type="function">
    <text evidence="1">Catalyzes the decarboxylation of four acetate groups of uroporphyrinogen-III to yield coproporphyrinogen-III.</text>
</comment>
<comment type="catalytic activity">
    <reaction evidence="1">
        <text>uroporphyrinogen III + 4 H(+) = coproporphyrinogen III + 4 CO2</text>
        <dbReference type="Rhea" id="RHEA:19865"/>
        <dbReference type="ChEBI" id="CHEBI:15378"/>
        <dbReference type="ChEBI" id="CHEBI:16526"/>
        <dbReference type="ChEBI" id="CHEBI:57308"/>
        <dbReference type="ChEBI" id="CHEBI:57309"/>
        <dbReference type="EC" id="4.1.1.37"/>
    </reaction>
</comment>
<comment type="pathway">
    <text evidence="1">Porphyrin-containing compound metabolism; protoporphyrin-IX biosynthesis; coproporphyrinogen-III from 5-aminolevulinate: step 4/4.</text>
</comment>
<comment type="subunit">
    <text evidence="1">Homodimer.</text>
</comment>
<comment type="subcellular location">
    <subcellularLocation>
        <location evidence="1">Cytoplasm</location>
    </subcellularLocation>
</comment>
<comment type="similarity">
    <text evidence="1">Belongs to the uroporphyrinogen decarboxylase family.</text>
</comment>
<proteinExistence type="inferred from homology"/>
<keyword id="KW-0963">Cytoplasm</keyword>
<keyword id="KW-0210">Decarboxylase</keyword>
<keyword id="KW-0456">Lyase</keyword>
<keyword id="KW-0627">Porphyrin biosynthesis</keyword>
<accession>Q1QA45</accession>
<organism>
    <name type="scientific">Psychrobacter cryohalolentis (strain ATCC BAA-1226 / DSM 17306 / VKM B-2378 / K5)</name>
    <dbReference type="NCBI Taxonomy" id="335284"/>
    <lineage>
        <taxon>Bacteria</taxon>
        <taxon>Pseudomonadati</taxon>
        <taxon>Pseudomonadota</taxon>
        <taxon>Gammaproteobacteria</taxon>
        <taxon>Moraxellales</taxon>
        <taxon>Moraxellaceae</taxon>
        <taxon>Psychrobacter</taxon>
    </lineage>
</organism>
<name>DCUP_PSYCK</name>
<dbReference type="EC" id="4.1.1.37" evidence="1"/>
<dbReference type="EMBL" id="CP000323">
    <property type="protein sequence ID" value="ABE75458.1"/>
    <property type="molecule type" value="Genomic_DNA"/>
</dbReference>
<dbReference type="RefSeq" id="WP_011514006.1">
    <property type="nucleotide sequence ID" value="NC_007969.1"/>
</dbReference>
<dbReference type="SMR" id="Q1QA45"/>
<dbReference type="STRING" id="335284.Pcryo_1681"/>
<dbReference type="KEGG" id="pcr:Pcryo_1681"/>
<dbReference type="eggNOG" id="COG0407">
    <property type="taxonomic scope" value="Bacteria"/>
</dbReference>
<dbReference type="HOGENOM" id="CLU_040933_0_0_6"/>
<dbReference type="UniPathway" id="UPA00251">
    <property type="reaction ID" value="UER00321"/>
</dbReference>
<dbReference type="Proteomes" id="UP000002425">
    <property type="component" value="Chromosome"/>
</dbReference>
<dbReference type="GO" id="GO:0005829">
    <property type="term" value="C:cytosol"/>
    <property type="evidence" value="ECO:0007669"/>
    <property type="project" value="TreeGrafter"/>
</dbReference>
<dbReference type="GO" id="GO:0004853">
    <property type="term" value="F:uroporphyrinogen decarboxylase activity"/>
    <property type="evidence" value="ECO:0007669"/>
    <property type="project" value="UniProtKB-UniRule"/>
</dbReference>
<dbReference type="GO" id="GO:0019353">
    <property type="term" value="P:protoporphyrinogen IX biosynthetic process from glutamate"/>
    <property type="evidence" value="ECO:0007669"/>
    <property type="project" value="TreeGrafter"/>
</dbReference>
<dbReference type="CDD" id="cd00717">
    <property type="entry name" value="URO-D"/>
    <property type="match status" value="1"/>
</dbReference>
<dbReference type="FunFam" id="3.20.20.210:FF:000001">
    <property type="entry name" value="Uroporphyrinogen decarboxylase"/>
    <property type="match status" value="1"/>
</dbReference>
<dbReference type="Gene3D" id="3.20.20.210">
    <property type="match status" value="1"/>
</dbReference>
<dbReference type="HAMAP" id="MF_00218">
    <property type="entry name" value="URO_D"/>
    <property type="match status" value="1"/>
</dbReference>
<dbReference type="InterPro" id="IPR038071">
    <property type="entry name" value="UROD/MetE-like_sf"/>
</dbReference>
<dbReference type="InterPro" id="IPR006361">
    <property type="entry name" value="Uroporphyrinogen_deCO2ase_HemE"/>
</dbReference>
<dbReference type="InterPro" id="IPR000257">
    <property type="entry name" value="Uroporphyrinogen_deCOase"/>
</dbReference>
<dbReference type="NCBIfam" id="TIGR01464">
    <property type="entry name" value="hemE"/>
    <property type="match status" value="1"/>
</dbReference>
<dbReference type="PANTHER" id="PTHR21091">
    <property type="entry name" value="METHYLTETRAHYDROFOLATE:HOMOCYSTEINE METHYLTRANSFERASE RELATED"/>
    <property type="match status" value="1"/>
</dbReference>
<dbReference type="PANTHER" id="PTHR21091:SF169">
    <property type="entry name" value="UROPORPHYRINOGEN DECARBOXYLASE"/>
    <property type="match status" value="1"/>
</dbReference>
<dbReference type="Pfam" id="PF01208">
    <property type="entry name" value="URO-D"/>
    <property type="match status" value="1"/>
</dbReference>
<dbReference type="SUPFAM" id="SSF51726">
    <property type="entry name" value="UROD/MetE-like"/>
    <property type="match status" value="1"/>
</dbReference>
<dbReference type="PROSITE" id="PS00906">
    <property type="entry name" value="UROD_1"/>
    <property type="match status" value="1"/>
</dbReference>
<dbReference type="PROSITE" id="PS00907">
    <property type="entry name" value="UROD_2"/>
    <property type="match status" value="1"/>
</dbReference>
<gene>
    <name evidence="1" type="primary">hemE</name>
    <name type="ordered locus">Pcryo_1681</name>
</gene>
<evidence type="ECO:0000255" key="1">
    <source>
        <dbReference type="HAMAP-Rule" id="MF_00218"/>
    </source>
</evidence>
<sequence>MSASDNNNSLEQKFAPLKNDRLLRALRFEPIDTTPVWMMRQAGRYLPEYKATRAEAGDFMSLCKDTARATEVTLQPLRRYDLDAAILFSDILTIPDAMGLGLYFEAGEGPKFKHPIRQQADLDRLPVLDVNDSLDYVMRAVTSIRTALNGQVPLFGFSGSPWTLATYMIEGGSSKDYRYTKGFLYSNPDFLHQLLDKLATSVIDYLDAQVVAGAQILQIFDSWGGALGHRQFIDFSHAYNKRIVAELKVRHPEIPVVLFTKGGGLWLDIQADSEADALGLDWTMPIDRARQVLTESQRQLTKHHKKLQSSKAIQGNLDPATLYGSPATIRAEVNAMLDSAYANGEKTGYVANLGHGITQWVNPDNAKVFIDAVHDYKI</sequence>
<feature type="chain" id="PRO_0000325677" description="Uroporphyrinogen decarboxylase">
    <location>
        <begin position="1"/>
        <end position="378"/>
    </location>
</feature>
<feature type="binding site" evidence="1">
    <location>
        <begin position="40"/>
        <end position="44"/>
    </location>
    <ligand>
        <name>substrate</name>
    </ligand>
</feature>
<feature type="binding site" evidence="1">
    <location>
        <position position="90"/>
    </location>
    <ligand>
        <name>substrate</name>
    </ligand>
</feature>
<feature type="binding site" evidence="1">
    <location>
        <position position="167"/>
    </location>
    <ligand>
        <name>substrate</name>
    </ligand>
</feature>
<feature type="binding site" evidence="1">
    <location>
        <position position="222"/>
    </location>
    <ligand>
        <name>substrate</name>
    </ligand>
</feature>
<feature type="binding site" evidence="1">
    <location>
        <position position="355"/>
    </location>
    <ligand>
        <name>substrate</name>
    </ligand>
</feature>
<feature type="site" description="Transition state stabilizer" evidence="1">
    <location>
        <position position="90"/>
    </location>
</feature>